<organism>
    <name type="scientific">Rattus norvegicus</name>
    <name type="common">Rat</name>
    <dbReference type="NCBI Taxonomy" id="10116"/>
    <lineage>
        <taxon>Eukaryota</taxon>
        <taxon>Metazoa</taxon>
        <taxon>Chordata</taxon>
        <taxon>Craniata</taxon>
        <taxon>Vertebrata</taxon>
        <taxon>Euteleostomi</taxon>
        <taxon>Mammalia</taxon>
        <taxon>Eutheria</taxon>
        <taxon>Euarchontoglires</taxon>
        <taxon>Glires</taxon>
        <taxon>Rodentia</taxon>
        <taxon>Myomorpha</taxon>
        <taxon>Muroidea</taxon>
        <taxon>Muridae</taxon>
        <taxon>Murinae</taxon>
        <taxon>Rattus</taxon>
    </lineage>
</organism>
<keyword id="KW-0130">Cell adhesion</keyword>
<keyword id="KW-0965">Cell junction</keyword>
<keyword id="KW-1003">Cell membrane</keyword>
<keyword id="KW-0221">Differentiation</keyword>
<keyword id="KW-0903">Direct protein sequencing</keyword>
<keyword id="KW-1015">Disulfide bond</keyword>
<keyword id="KW-0325">Glycoprotein</keyword>
<keyword id="KW-0393">Immunoglobulin domain</keyword>
<keyword id="KW-0449">Lipoprotein</keyword>
<keyword id="KW-0472">Membrane</keyword>
<keyword id="KW-0564">Palmitate</keyword>
<keyword id="KW-1185">Reference proteome</keyword>
<keyword id="KW-0964">Secreted</keyword>
<keyword id="KW-0732">Signal</keyword>
<keyword id="KW-0744">Spermatogenesis</keyword>
<keyword id="KW-0796">Tight junction</keyword>
<keyword id="KW-0812">Transmembrane</keyword>
<keyword id="KW-1133">Transmembrane helix</keyword>
<name>JAM3_RAT</name>
<proteinExistence type="evidence at protein level"/>
<dbReference type="EMBL" id="BC079429">
    <property type="protein sequence ID" value="AAH79429.1"/>
    <property type="molecule type" value="mRNA"/>
</dbReference>
<dbReference type="RefSeq" id="NP_001004269.1">
    <property type="nucleotide sequence ID" value="NM_001004269.1"/>
</dbReference>
<dbReference type="SMR" id="Q68FQ2"/>
<dbReference type="BioGRID" id="261047">
    <property type="interactions" value="1"/>
</dbReference>
<dbReference type="DIP" id="DIP-46159N"/>
<dbReference type="FunCoup" id="Q68FQ2">
    <property type="interactions" value="2614"/>
</dbReference>
<dbReference type="IntAct" id="Q68FQ2">
    <property type="interactions" value="1"/>
</dbReference>
<dbReference type="STRING" id="10116.ENSRNOP00000012247"/>
<dbReference type="GlyCosmos" id="Q68FQ2">
    <property type="glycosylation" value="2 sites, 5 glycans"/>
</dbReference>
<dbReference type="GlyGen" id="Q68FQ2">
    <property type="glycosylation" value="2 sites, 5 N-linked glycans (1 site)"/>
</dbReference>
<dbReference type="iPTMnet" id="Q68FQ2"/>
<dbReference type="PhosphoSitePlus" id="Q68FQ2"/>
<dbReference type="SwissPalm" id="Q68FQ2"/>
<dbReference type="PaxDb" id="10116-ENSRNOP00000012247"/>
<dbReference type="Ensembl" id="ENSRNOT00000012247.5">
    <property type="protein sequence ID" value="ENSRNOP00000012247.4"/>
    <property type="gene ID" value="ENSRNOG00000009149.5"/>
</dbReference>
<dbReference type="GeneID" id="315509"/>
<dbReference type="KEGG" id="rno:315509"/>
<dbReference type="UCSC" id="RGD:1303248">
    <property type="organism name" value="rat"/>
</dbReference>
<dbReference type="AGR" id="RGD:1303248"/>
<dbReference type="CTD" id="83700"/>
<dbReference type="RGD" id="1303248">
    <property type="gene designation" value="Jam3"/>
</dbReference>
<dbReference type="eggNOG" id="ENOG502QTVP">
    <property type="taxonomic scope" value="Eukaryota"/>
</dbReference>
<dbReference type="GeneTree" id="ENSGT00940000156937"/>
<dbReference type="HOGENOM" id="CLU_067351_2_0_1"/>
<dbReference type="InParanoid" id="Q68FQ2"/>
<dbReference type="OrthoDB" id="58726at9989"/>
<dbReference type="PhylomeDB" id="Q68FQ2"/>
<dbReference type="TreeFam" id="TF331459"/>
<dbReference type="Reactome" id="R-RNO-202733">
    <property type="pathway name" value="Cell surface interactions at the vascular wall"/>
</dbReference>
<dbReference type="Reactome" id="R-RNO-216083">
    <property type="pathway name" value="Integrin cell surface interactions"/>
</dbReference>
<dbReference type="PRO" id="PR:Q68FQ2"/>
<dbReference type="Proteomes" id="UP000002494">
    <property type="component" value="Chromosome 8"/>
</dbReference>
<dbReference type="Bgee" id="ENSRNOG00000009149">
    <property type="expression patterns" value="Expressed in heart and 19 other cell types or tissues"/>
</dbReference>
<dbReference type="GO" id="GO:0005923">
    <property type="term" value="C:bicellular tight junction"/>
    <property type="evidence" value="ECO:0000266"/>
    <property type="project" value="RGD"/>
</dbReference>
<dbReference type="GO" id="GO:0044291">
    <property type="term" value="C:cell-cell contact zone"/>
    <property type="evidence" value="ECO:0000266"/>
    <property type="project" value="RGD"/>
</dbReference>
<dbReference type="GO" id="GO:0005911">
    <property type="term" value="C:cell-cell junction"/>
    <property type="evidence" value="ECO:0000266"/>
    <property type="project" value="RGD"/>
</dbReference>
<dbReference type="GO" id="GO:0030057">
    <property type="term" value="C:desmosome"/>
    <property type="evidence" value="ECO:0000266"/>
    <property type="project" value="RGD"/>
</dbReference>
<dbReference type="GO" id="GO:0005615">
    <property type="term" value="C:extracellular space"/>
    <property type="evidence" value="ECO:0000266"/>
    <property type="project" value="RGD"/>
</dbReference>
<dbReference type="GO" id="GO:0031941">
    <property type="term" value="C:filamentous actin"/>
    <property type="evidence" value="ECO:0000266"/>
    <property type="project" value="RGD"/>
</dbReference>
<dbReference type="GO" id="GO:0005902">
    <property type="term" value="C:microvillus"/>
    <property type="evidence" value="ECO:0000266"/>
    <property type="project" value="RGD"/>
</dbReference>
<dbReference type="GO" id="GO:0033010">
    <property type="term" value="C:paranodal junction"/>
    <property type="evidence" value="ECO:0000266"/>
    <property type="project" value="RGD"/>
</dbReference>
<dbReference type="GO" id="GO:0005886">
    <property type="term" value="C:plasma membrane"/>
    <property type="evidence" value="ECO:0000250"/>
    <property type="project" value="UniProtKB"/>
</dbReference>
<dbReference type="GO" id="GO:0098636">
    <property type="term" value="C:protein complex involved in cell adhesion"/>
    <property type="evidence" value="ECO:0000250"/>
    <property type="project" value="UniProtKB"/>
</dbReference>
<dbReference type="GO" id="GO:0043220">
    <property type="term" value="C:Schmidt-Lanterman incisure"/>
    <property type="evidence" value="ECO:0000266"/>
    <property type="project" value="RGD"/>
</dbReference>
<dbReference type="GO" id="GO:0070160">
    <property type="term" value="C:tight junction"/>
    <property type="evidence" value="ECO:0000266"/>
    <property type="project" value="RGD"/>
</dbReference>
<dbReference type="GO" id="GO:0098632">
    <property type="term" value="F:cell-cell adhesion mediator activity"/>
    <property type="evidence" value="ECO:0000266"/>
    <property type="project" value="RGD"/>
</dbReference>
<dbReference type="GO" id="GO:0042802">
    <property type="term" value="F:identical protein binding"/>
    <property type="evidence" value="ECO:0000266"/>
    <property type="project" value="RGD"/>
</dbReference>
<dbReference type="GO" id="GO:0005178">
    <property type="term" value="F:integrin binding"/>
    <property type="evidence" value="ECO:0000266"/>
    <property type="project" value="RGD"/>
</dbReference>
<dbReference type="GO" id="GO:0046982">
    <property type="term" value="F:protein heterodimerization activity"/>
    <property type="evidence" value="ECO:0007669"/>
    <property type="project" value="InterPro"/>
</dbReference>
<dbReference type="GO" id="GO:0042803">
    <property type="term" value="F:protein homodimerization activity"/>
    <property type="evidence" value="ECO:0007669"/>
    <property type="project" value="InterPro"/>
</dbReference>
<dbReference type="GO" id="GO:0002250">
    <property type="term" value="P:adaptive immune response"/>
    <property type="evidence" value="ECO:0000266"/>
    <property type="project" value="RGD"/>
</dbReference>
<dbReference type="GO" id="GO:0034333">
    <property type="term" value="P:adherens junction assembly"/>
    <property type="evidence" value="ECO:0000266"/>
    <property type="project" value="RGD"/>
</dbReference>
<dbReference type="GO" id="GO:0001525">
    <property type="term" value="P:angiogenesis"/>
    <property type="evidence" value="ECO:0000266"/>
    <property type="project" value="RGD"/>
</dbReference>
<dbReference type="GO" id="GO:0045176">
    <property type="term" value="P:apical protein localization"/>
    <property type="evidence" value="ECO:0000266"/>
    <property type="project" value="RGD"/>
</dbReference>
<dbReference type="GO" id="GO:0031103">
    <property type="term" value="P:axon regeneration"/>
    <property type="evidence" value="ECO:0000270"/>
    <property type="project" value="RGD"/>
</dbReference>
<dbReference type="GO" id="GO:0007155">
    <property type="term" value="P:cell adhesion"/>
    <property type="evidence" value="ECO:0000266"/>
    <property type="project" value="RGD"/>
</dbReference>
<dbReference type="GO" id="GO:0016477">
    <property type="term" value="P:cell migration"/>
    <property type="evidence" value="ECO:0000266"/>
    <property type="project" value="RGD"/>
</dbReference>
<dbReference type="GO" id="GO:0098609">
    <property type="term" value="P:cell-cell adhesion"/>
    <property type="evidence" value="ECO:0000266"/>
    <property type="project" value="RGD"/>
</dbReference>
<dbReference type="GO" id="GO:0007160">
    <property type="term" value="P:cell-matrix adhesion"/>
    <property type="evidence" value="ECO:0000266"/>
    <property type="project" value="RGD"/>
</dbReference>
<dbReference type="GO" id="GO:0030010">
    <property type="term" value="P:establishment of cell polarity"/>
    <property type="evidence" value="ECO:0000266"/>
    <property type="project" value="RGD"/>
</dbReference>
<dbReference type="GO" id="GO:0097530">
    <property type="term" value="P:granulocyte migration"/>
    <property type="evidence" value="ECO:0000266"/>
    <property type="project" value="RGD"/>
</dbReference>
<dbReference type="GO" id="GO:0097241">
    <property type="term" value="P:hematopoietic stem cell migration to bone marrow"/>
    <property type="evidence" value="ECO:0000266"/>
    <property type="project" value="RGD"/>
</dbReference>
<dbReference type="GO" id="GO:0034113">
    <property type="term" value="P:heterotypic cell-cell adhesion"/>
    <property type="evidence" value="ECO:0000266"/>
    <property type="project" value="RGD"/>
</dbReference>
<dbReference type="GO" id="GO:0002523">
    <property type="term" value="P:leukocyte migration involved in inflammatory response"/>
    <property type="evidence" value="ECO:0000266"/>
    <property type="project" value="RGD"/>
</dbReference>
<dbReference type="GO" id="GO:0042552">
    <property type="term" value="P:myelination"/>
    <property type="evidence" value="ECO:0000266"/>
    <property type="project" value="RGD"/>
</dbReference>
<dbReference type="GO" id="GO:0002318">
    <property type="term" value="P:myeloid progenitor cell differentiation"/>
    <property type="evidence" value="ECO:0000266"/>
    <property type="project" value="RGD"/>
</dbReference>
<dbReference type="GO" id="GO:0033629">
    <property type="term" value="P:negative regulation of cell adhesion mediated by integrin"/>
    <property type="evidence" value="ECO:0000266"/>
    <property type="project" value="RGD"/>
</dbReference>
<dbReference type="GO" id="GO:0033624">
    <property type="term" value="P:negative regulation of integrin activation"/>
    <property type="evidence" value="ECO:0000266"/>
    <property type="project" value="RGD"/>
</dbReference>
<dbReference type="GO" id="GO:0001780">
    <property type="term" value="P:neutrophil homeostasis"/>
    <property type="evidence" value="ECO:0000266"/>
    <property type="project" value="RGD"/>
</dbReference>
<dbReference type="GO" id="GO:1905710">
    <property type="term" value="P:positive regulation of membrane permeability"/>
    <property type="evidence" value="ECO:0000266"/>
    <property type="project" value="RGD"/>
</dbReference>
<dbReference type="GO" id="GO:2000439">
    <property type="term" value="P:positive regulation of monocyte extravasation"/>
    <property type="evidence" value="ECO:0000266"/>
    <property type="project" value="RGD"/>
</dbReference>
<dbReference type="GO" id="GO:1902414">
    <property type="term" value="P:protein localization to cell junction"/>
    <property type="evidence" value="ECO:0000266"/>
    <property type="project" value="RGD"/>
</dbReference>
<dbReference type="GO" id="GO:0034394">
    <property type="term" value="P:protein localization to cell surface"/>
    <property type="evidence" value="ECO:0000266"/>
    <property type="project" value="RGD"/>
</dbReference>
<dbReference type="GO" id="GO:0090138">
    <property type="term" value="P:regulation of actin cytoskeleton organization by cell-cell adhesion"/>
    <property type="evidence" value="ECO:0000266"/>
    <property type="project" value="RGD"/>
</dbReference>
<dbReference type="GO" id="GO:0090022">
    <property type="term" value="P:regulation of neutrophil chemotaxis"/>
    <property type="evidence" value="ECO:0000266"/>
    <property type="project" value="RGD"/>
</dbReference>
<dbReference type="GO" id="GO:0007286">
    <property type="term" value="P:spermatid development"/>
    <property type="evidence" value="ECO:0000266"/>
    <property type="project" value="RGD"/>
</dbReference>
<dbReference type="GO" id="GO:0007283">
    <property type="term" value="P:spermatogenesis"/>
    <property type="evidence" value="ECO:0000266"/>
    <property type="project" value="RGD"/>
</dbReference>
<dbReference type="GO" id="GO:0019226">
    <property type="term" value="P:transmission of nerve impulse"/>
    <property type="evidence" value="ECO:0000266"/>
    <property type="project" value="RGD"/>
</dbReference>
<dbReference type="FunFam" id="2.60.40.10:FF:000342">
    <property type="entry name" value="Junctional adhesion molecule A"/>
    <property type="match status" value="1"/>
</dbReference>
<dbReference type="FunFam" id="2.60.40.10:FF:000766">
    <property type="entry name" value="junctional adhesion molecule C"/>
    <property type="match status" value="1"/>
</dbReference>
<dbReference type="Gene3D" id="2.60.40.10">
    <property type="entry name" value="Immunoglobulins"/>
    <property type="match status" value="2"/>
</dbReference>
<dbReference type="InterPro" id="IPR007110">
    <property type="entry name" value="Ig-like_dom"/>
</dbReference>
<dbReference type="InterPro" id="IPR036179">
    <property type="entry name" value="Ig-like_dom_sf"/>
</dbReference>
<dbReference type="InterPro" id="IPR013783">
    <property type="entry name" value="Ig-like_fold"/>
</dbReference>
<dbReference type="InterPro" id="IPR003599">
    <property type="entry name" value="Ig_sub"/>
</dbReference>
<dbReference type="InterPro" id="IPR003598">
    <property type="entry name" value="Ig_sub2"/>
</dbReference>
<dbReference type="InterPro" id="IPR013106">
    <property type="entry name" value="Ig_V-set"/>
</dbReference>
<dbReference type="InterPro" id="IPR042974">
    <property type="entry name" value="JAM-C"/>
</dbReference>
<dbReference type="PANTHER" id="PTHR44598">
    <property type="entry name" value="JUNCTIONAL ADHESION MOLECULE C"/>
    <property type="match status" value="1"/>
</dbReference>
<dbReference type="PANTHER" id="PTHR44598:SF2">
    <property type="entry name" value="JUNCTIONAL ADHESION MOLECULE C"/>
    <property type="match status" value="1"/>
</dbReference>
<dbReference type="Pfam" id="PF13927">
    <property type="entry name" value="Ig_3"/>
    <property type="match status" value="1"/>
</dbReference>
<dbReference type="Pfam" id="PF07686">
    <property type="entry name" value="V-set"/>
    <property type="match status" value="1"/>
</dbReference>
<dbReference type="SMART" id="SM00409">
    <property type="entry name" value="IG"/>
    <property type="match status" value="2"/>
</dbReference>
<dbReference type="SMART" id="SM00408">
    <property type="entry name" value="IGc2"/>
    <property type="match status" value="2"/>
</dbReference>
<dbReference type="SMART" id="SM00406">
    <property type="entry name" value="IGv"/>
    <property type="match status" value="2"/>
</dbReference>
<dbReference type="SUPFAM" id="SSF48726">
    <property type="entry name" value="Immunoglobulin"/>
    <property type="match status" value="2"/>
</dbReference>
<dbReference type="PROSITE" id="PS50835">
    <property type="entry name" value="IG_LIKE"/>
    <property type="match status" value="2"/>
</dbReference>
<sequence length="310" mass="34783">MALSRRLRLRLCARLPDFFLLLLFRGCVIEAVNLKSSNRNPVVHEFESVELSCIITDSQTNDPRIEWKKIQDGQTTYVYFDNKIQGDLAGRTDVFGKTSLRIWNVTRSDSAIYRCEVVALNDRKEVDELTIELIVQVKPVAPVCRVPKAVPVGKAATLQCQESEGYPRPYYSWYRNDVPLPTDSRANPRFQNSSFHVNSETGTLVFSAVHKEDSGQYYCIASNDAGAARCEGQDMEVYDLNIAGIIGGVLVVLIVLAVITMGICCAYRRGCFISSKQDGESYKSPGKHEGVNYIRTSEEGDFRHKSSFVI</sequence>
<comment type="function">
    <text evidence="1 2 3">Junctional adhesion protein that mediates heterotypic cell-cell interactions with its cognate receptor JAM2 to regulate different cellular processes. Plays a role in homing and mobilization of hematopoietic stem and progenitor cells within the bone marrow. At the surface of bone marrow stromal cells, it contributes to the retention of the hematopoietic stem and progenitor cells expressing JAM3 (By similarity). Plays a central role in leukocytes extravasation by facilitating transmigration through the endothelium (By similarity). Plays a role in spermatogenesis where JAM2 and JAM3, which are respectively expressed by Sertoli and germ cells, mediate an interaction between both cell types and play an essential role in the anchorage of germ cells onto Sertoli cells and the assembly of cell polarity complexes during spermatid differentiation (By similarity). Also functions as a counter-receptor for ITGAM, mediating leukocyte-platelet interactions and is involved in the regulation of transepithelial migration of polymorphonuclear neutrophils (PMN). Plays a role in angiogenesis. Plays a role in the regulation of cell migration (By similarity). During myogenesis, it is involved in myocyte fusion (By similarity).</text>
</comment>
<comment type="function">
    <molecule>Soluble form of JAM-C</molecule>
    <text evidence="2">Promotes chemotaxis of vascular endothelial cells and stimulates angiogenesis.</text>
</comment>
<comment type="subunit">
    <text evidence="2 3">Interacts with ITGAM (By similarity). Interacts with GORASP2 (By similarity).</text>
</comment>
<comment type="subcellular location">
    <subcellularLocation>
        <location evidence="2">Cell membrane</location>
        <topology evidence="2">Single-pass type I membrane protein</topology>
    </subcellularLocation>
    <subcellularLocation>
        <location evidence="2">Cell junction</location>
    </subcellularLocation>
    <subcellularLocation>
        <location evidence="2">Cell junction</location>
        <location evidence="2">Desmosome</location>
    </subcellularLocation>
    <subcellularLocation>
        <location evidence="2">Cell junction</location>
        <location evidence="2">Tight junction</location>
    </subcellularLocation>
    <text evidence="2 3">Detected in the acrosome region in developing spermatids (By similarity). In epithelial cells, it is expressed at desmosomes but not at tight junctions (By similarity). Localizes at the cell surface of endothelial cells; treatment of endothelial cells with vascular endothelial growth factor stimulates recruitment of JAM3 to cell-cell contacts (By similarity).</text>
</comment>
<comment type="subcellular location">
    <molecule>Soluble form of JAM-C</molecule>
    <subcellularLocation>
        <location evidence="2">Secreted</location>
    </subcellularLocation>
</comment>
<comment type="domain">
    <text evidence="3">The Ig-like V-type domain mediates interaction with JAM2.</text>
</comment>
<comment type="PTM">
    <text evidence="2">Proteolytically cleaved from endothelial cells surface into a soluble form by ADAM10 and ADAM17; the release of soluble JAM3 is increased by pro-inflammatory factors.</text>
</comment>
<comment type="PTM">
    <text evidence="2">S-palmitoylated by ZDHHC7. S-palmitoylation promotes expression at tight junctions.</text>
</comment>
<comment type="similarity">
    <text evidence="6">Belongs to the immunoglobulin superfamily.</text>
</comment>
<reference key="1">
    <citation type="journal article" date="2004" name="Genome Res.">
        <title>The status, quality, and expansion of the NIH full-length cDNA project: the Mammalian Gene Collection (MGC).</title>
        <authorList>
            <consortium name="The MGC Project Team"/>
        </authorList>
    </citation>
    <scope>NUCLEOTIDE SEQUENCE [LARGE SCALE MRNA]</scope>
    <source>
        <tissue>Testis</tissue>
    </source>
</reference>
<reference key="2">
    <citation type="submission" date="2007-09" db="UniProtKB">
        <authorList>
            <person name="Lubec G."/>
            <person name="Kang S.U."/>
            <person name="Lubec S."/>
        </authorList>
    </citation>
    <scope>PROTEIN SEQUENCE OF 84-91; 115-123; 176-185 AND 288-303</scope>
    <scope>IDENTIFICATION BY MASS SPECTROMETRY</scope>
    <source>
        <strain>Sprague-Dawley</strain>
        <tissue>Brain</tissue>
    </source>
</reference>
<reference key="3">
    <citation type="journal article" date="2013" name="J. Proteome Res.">
        <title>Site-specific glycan-peptide analysis for determination of N-glycoproteome heterogeneity.</title>
        <authorList>
            <person name="Parker B.L."/>
            <person name="Thaysen-Andersen M."/>
            <person name="Solis N."/>
            <person name="Scott N.E."/>
            <person name="Larsen M.R."/>
            <person name="Graham M.E."/>
            <person name="Packer N.H."/>
            <person name="Cordwell S.J."/>
        </authorList>
    </citation>
    <scope>GLYCOSYLATION [LARGE SCALE ANALYSIS] AT ASN-192</scope>
    <scope>IDENTIFICATION BY MASS SPECTROMETRY [LARGE SCALE ANALYSIS]</scope>
    <source>
        <tissue>Brain</tissue>
    </source>
</reference>
<protein>
    <recommendedName>
        <fullName>Junctional adhesion molecule C</fullName>
        <shortName>JAM-C</shortName>
    </recommendedName>
    <alternativeName>
        <fullName>Junctional adhesion molecule 3</fullName>
        <shortName>JAM-3</shortName>
    </alternativeName>
    <component>
        <recommendedName>
            <fullName evidence="2">Soluble form of JAM-C</fullName>
            <shortName evidence="2">sJAM-C</shortName>
        </recommendedName>
    </component>
</protein>
<evidence type="ECO:0000250" key="1">
    <source>
        <dbReference type="UniProtKB" id="A3KPA0"/>
    </source>
</evidence>
<evidence type="ECO:0000250" key="2">
    <source>
        <dbReference type="UniProtKB" id="Q9BX67"/>
    </source>
</evidence>
<evidence type="ECO:0000250" key="3">
    <source>
        <dbReference type="UniProtKB" id="Q9D8B7"/>
    </source>
</evidence>
<evidence type="ECO:0000255" key="4"/>
<evidence type="ECO:0000255" key="5">
    <source>
        <dbReference type="PROSITE-ProRule" id="PRU00114"/>
    </source>
</evidence>
<evidence type="ECO:0000305" key="6"/>
<evidence type="ECO:0007744" key="7">
    <source>
    </source>
</evidence>
<accession>Q68FQ2</accession>
<feature type="signal peptide" evidence="4">
    <location>
        <begin position="1"/>
        <end position="31"/>
    </location>
</feature>
<feature type="chain" id="PRO_0000015073" description="Junctional adhesion molecule C">
    <location>
        <begin position="32"/>
        <end position="310"/>
    </location>
</feature>
<feature type="chain" id="PRO_0000445338" description="Soluble form of JAM-C">
    <location>
        <begin position="32"/>
        <end status="unknown"/>
    </location>
</feature>
<feature type="topological domain" description="Extracellular" evidence="4">
    <location>
        <begin position="32"/>
        <end position="241"/>
    </location>
</feature>
<feature type="transmembrane region" description="Helical" evidence="4">
    <location>
        <begin position="242"/>
        <end position="262"/>
    </location>
</feature>
<feature type="topological domain" description="Cytoplasmic" evidence="4">
    <location>
        <begin position="263"/>
        <end position="310"/>
    </location>
</feature>
<feature type="domain" description="Ig-like V-type">
    <location>
        <begin position="35"/>
        <end position="127"/>
    </location>
</feature>
<feature type="domain" description="Ig-like C2-type">
    <location>
        <begin position="139"/>
        <end position="236"/>
    </location>
</feature>
<feature type="lipid moiety-binding region" description="S-palmitoyl cysteine" evidence="2">
    <location>
        <position position="264"/>
    </location>
</feature>
<feature type="lipid moiety-binding region" description="S-palmitoyl cysteine" evidence="2">
    <location>
        <position position="265"/>
    </location>
</feature>
<feature type="glycosylation site" description="N-linked (GlcNAc...) asparagine" evidence="4">
    <location>
        <position position="104"/>
    </location>
</feature>
<feature type="glycosylation site" description="N-linked (GlcNAc...) asparagine" evidence="7">
    <location>
        <position position="192"/>
    </location>
</feature>
<feature type="disulfide bond" evidence="5">
    <location>
        <begin position="53"/>
        <end position="115"/>
    </location>
</feature>
<feature type="disulfide bond" evidence="5">
    <location>
        <begin position="160"/>
        <end position="219"/>
    </location>
</feature>
<gene>
    <name type="primary">Jam3</name>
</gene>